<protein>
    <recommendedName>
        <fullName>Matrix protein</fullName>
    </recommendedName>
    <alternativeName>
        <fullName>Phosphoprotein M2</fullName>
    </alternativeName>
</protein>
<comment type="function">
    <text evidence="2 3">Plays a major role in assembly, budding and uncoating of virion after membrane fusion. Completely covers the ribonucleoprotein coil and keep it in condensed bullet-shaped form. Inhibits viral transcription and stimulates replication. Plays a major role in early induction of TRAIL-mediated apoptosis in infected neurons (By similarity). Inhibits the integrated stress response (ISR) in the infected cell by blocking the formation of stress granules (By similarity).</text>
</comment>
<comment type="subunit">
    <text evidence="2">Homomultimer. Interacts with nucleoprotein and with the cytoplasmic domain of glycoprotein. Interacts with host ATP6V1A; this interaction plays an important role in virion uncoating after viral entry.</text>
</comment>
<comment type="subcellular location">
    <subcellularLocation>
        <location evidence="2">Virion membrane</location>
        <topology evidence="2">Peripheral membrane protein</topology>
    </subcellularLocation>
    <subcellularLocation>
        <location evidence="2">Host endomembrane system</location>
        <topology evidence="2">Peripheral membrane protein</topology>
    </subcellularLocation>
    <subcellularLocation>
        <location evidence="2">Host cytoplasm</location>
    </subcellularLocation>
</comment>
<comment type="domain">
    <text evidence="6">Late-budding domains (L domains) are short sequence motifs essential for viral particle budding. They recruit proteins of the host ESCRT machinery (Endosomal Sorting Complex Required for Transport) or ESCRT-associated proteins. Matrix protein contains one L domain: a PPXY motif which potentially interacts with the WW domain 3 of NEDD4 E3 ubiquitin ligase (Potential).</text>
</comment>
<comment type="miscellaneous">
    <text evidence="1">Most abundant protein in the virion.</text>
</comment>
<comment type="similarity">
    <text evidence="6">Belongs to the lyssavirus matrix protein family.</text>
</comment>
<dbReference type="EMBL" id="X13357">
    <property type="protein sequence ID" value="CAA31736.1"/>
    <property type="molecule type" value="Genomic_RNA"/>
</dbReference>
<dbReference type="EMBL" id="DQ099525">
    <property type="protein sequence ID" value="AAZ07893.1"/>
    <property type="molecule type" value="Genomic_RNA"/>
</dbReference>
<dbReference type="PIR" id="S07816">
    <property type="entry name" value="MFVNAV"/>
</dbReference>
<dbReference type="SMR" id="P15200"/>
<dbReference type="IntAct" id="P15200">
    <property type="interactions" value="5"/>
</dbReference>
<dbReference type="Proteomes" id="UP000008617">
    <property type="component" value="Genome"/>
</dbReference>
<dbReference type="GO" id="GO:0030430">
    <property type="term" value="C:host cell cytoplasm"/>
    <property type="evidence" value="ECO:0007669"/>
    <property type="project" value="UniProtKB-SubCell"/>
</dbReference>
<dbReference type="GO" id="GO:0033645">
    <property type="term" value="C:host cell endomembrane system"/>
    <property type="evidence" value="ECO:0007669"/>
    <property type="project" value="UniProtKB-SubCell"/>
</dbReference>
<dbReference type="GO" id="GO:0016020">
    <property type="term" value="C:membrane"/>
    <property type="evidence" value="ECO:0007669"/>
    <property type="project" value="UniProtKB-KW"/>
</dbReference>
<dbReference type="GO" id="GO:0019031">
    <property type="term" value="C:viral envelope"/>
    <property type="evidence" value="ECO:0007669"/>
    <property type="project" value="UniProtKB-KW"/>
</dbReference>
<dbReference type="GO" id="GO:0055036">
    <property type="term" value="C:virion membrane"/>
    <property type="evidence" value="ECO:0007669"/>
    <property type="project" value="UniProtKB-SubCell"/>
</dbReference>
<dbReference type="GO" id="GO:0039660">
    <property type="term" value="F:structural constituent of virion"/>
    <property type="evidence" value="ECO:0007669"/>
    <property type="project" value="UniProtKB-KW"/>
</dbReference>
<dbReference type="GO" id="GO:0039702">
    <property type="term" value="P:viral budding via host ESCRT complex"/>
    <property type="evidence" value="ECO:0007669"/>
    <property type="project" value="UniProtKB-KW"/>
</dbReference>
<dbReference type="FunFam" id="3.10.460.20:FF:000001">
    <property type="entry name" value="Matrix protein"/>
    <property type="match status" value="1"/>
</dbReference>
<dbReference type="Gene3D" id="3.10.460.20">
    <property type="entry name" value="Rhabdovirus matrix protein M2"/>
    <property type="match status" value="1"/>
</dbReference>
<dbReference type="InterPro" id="IPR006870">
    <property type="entry name" value="Rhabdo_M"/>
</dbReference>
<dbReference type="InterPro" id="IPR038617">
    <property type="entry name" value="Rhabdovirus_M_sf"/>
</dbReference>
<dbReference type="Pfam" id="PF04785">
    <property type="entry name" value="Rhabdo_M2"/>
    <property type="match status" value="1"/>
</dbReference>
<organism>
    <name type="scientific">Rabies virus (strain PM1503/AVO1)</name>
    <name type="common">RABV</name>
    <dbReference type="NCBI Taxonomy" id="11293"/>
    <lineage>
        <taxon>Viruses</taxon>
        <taxon>Riboviria</taxon>
        <taxon>Orthornavirae</taxon>
        <taxon>Negarnaviricota</taxon>
        <taxon>Haploviricotina</taxon>
        <taxon>Monjiviricetes</taxon>
        <taxon>Mononegavirales</taxon>
        <taxon>Rhabdoviridae</taxon>
        <taxon>Alpharhabdovirinae</taxon>
        <taxon>Lyssavirus</taxon>
        <taxon>Lyssavirus rabies</taxon>
    </lineage>
</organism>
<reference key="1">
    <citation type="journal article" date="1988" name="Biochimie">
        <title>Sequence of the 3386 3' nucleotides of the genome of the AVO1 strain rabies virus: structural similarities in the protein regions involved in transcription.</title>
        <authorList>
            <person name="Poch O."/>
            <person name="Tordo N."/>
            <person name="Keith G."/>
        </authorList>
    </citation>
    <scope>NUCLEOTIDE SEQUENCE [GENOMIC RNA]</scope>
    <source>
        <strain>Isolate AVO1</strain>
    </source>
</reference>
<reference key="2">
    <citation type="submission" date="2005-06" db="EMBL/GenBank/DDBJ databases">
        <title>Characterization of rabies virus vaccine strains.</title>
        <authorList>
            <person name="Stallkamp I."/>
            <person name="Lopez-Yomayuza C.C."/>
            <person name="Thiel H.-J."/>
        </authorList>
    </citation>
    <scope>NUCLEOTIDE SEQUENCE [GENOMIC RNA]</scope>
    <source>
        <strain>Isolate PM1503</strain>
    </source>
</reference>
<organismHost>
    <name type="scientific">Homo sapiens</name>
    <name type="common">Human</name>
    <dbReference type="NCBI Taxonomy" id="9606"/>
</organismHost>
<organismHost>
    <name type="scientific">Mammalia</name>
    <dbReference type="NCBI Taxonomy" id="40674"/>
</organismHost>
<keyword id="KW-0053">Apoptosis</keyword>
<keyword id="KW-1035">Host cytoplasm</keyword>
<keyword id="KW-1043">Host membrane</keyword>
<keyword id="KW-0945">Host-virus interaction</keyword>
<keyword id="KW-0472">Membrane</keyword>
<keyword id="KW-1198">Viral budding</keyword>
<keyword id="KW-1187">Viral budding via the host ESCRT complexes</keyword>
<keyword id="KW-0261">Viral envelope protein</keyword>
<keyword id="KW-0468">Viral matrix protein</keyword>
<keyword id="KW-1188">Viral release from host cell</keyword>
<keyword id="KW-0946">Virion</keyword>
<gene>
    <name type="primary">M</name>
</gene>
<accession>P15200</accession>
<accession>Q4F901</accession>
<sequence>MNVLRKIVKKCRDEDTQKPSPVSAPPDDDDLWLPPPEYVPLKELTSKKNMRNFCVNGDVKACSPNGYSFRILRHILRSFNEIYSGNHRMIGLVKVVVGLALSGAPVPEGMNWVYKLRRTLIFQWADSRGPLEGEELEYSQEITWDDDTEFVGLQIRVSARQCHIQGRIWCINTNSRACQLWSDMSLQTQRSEEDKDSSLLLE</sequence>
<evidence type="ECO:0000250" key="1"/>
<evidence type="ECO:0000250" key="2">
    <source>
        <dbReference type="UniProtKB" id="P16287"/>
    </source>
</evidence>
<evidence type="ECO:0000250" key="3">
    <source>
        <dbReference type="UniProtKB" id="P25224"/>
    </source>
</evidence>
<evidence type="ECO:0000255" key="4"/>
<evidence type="ECO:0000256" key="5">
    <source>
        <dbReference type="SAM" id="MobiDB-lite"/>
    </source>
</evidence>
<evidence type="ECO:0000305" key="6"/>
<name>MATRX_RABVA</name>
<proteinExistence type="inferred from homology"/>
<feature type="chain" id="PRO_0000222846" description="Matrix protein">
    <location>
        <begin position="1"/>
        <end position="202"/>
    </location>
</feature>
<feature type="region of interest" description="Disordered" evidence="5">
    <location>
        <begin position="12"/>
        <end position="33"/>
    </location>
</feature>
<feature type="region of interest" description="Essential for glycoprotein binding" evidence="1">
    <location>
        <begin position="115"/>
        <end position="151"/>
    </location>
</feature>
<feature type="short sequence motif" description="PPXY motif" evidence="4">
    <location>
        <begin position="35"/>
        <end position="38"/>
    </location>
</feature>
<feature type="site" description="Involved in the inhibition of stress granules formation and contributes therefore to virulence" evidence="3">
    <location>
        <position position="95"/>
    </location>
</feature>
<feature type="sequence variant" description="In strain: Isolate AVO1.">
    <original>D</original>
    <variation>Y</variation>
    <location>
        <position position="27"/>
    </location>
</feature>
<feature type="sequence variant" description="In strain: Isolate AVO1.">
    <original>D</original>
    <variation>E</variation>
    <location>
        <position position="58"/>
    </location>
</feature>
<feature type="sequence variant" description="In strain: Isolate AVO1.">
    <original>S</original>
    <variation>G</variation>
    <location>
        <position position="158"/>
    </location>
</feature>
<feature type="sequence variant" description="In strain: Isolate AVO1.">
    <original>T</original>
    <variation>S</variation>
    <location>
        <position position="173"/>
    </location>
</feature>